<gene>
    <name evidence="1" type="primary">atpF2</name>
    <name type="ordered locus">BQ03160</name>
</gene>
<sequence length="164" mass="18578">MTDTFWAFVGLVLFLALLAYFKVPEMIVHRLDARAKRIKDELDEALRLREEAQEVLAEYQRKHAEAEKDAQEIIAAAKREVEAVVSEARTKAEEYVKNRNKLAEQKIAQAEADAIRVVSSSAVDLAVSAARVLIEQELDSNKANELIKESLFEESLTKMKAYLN</sequence>
<protein>
    <recommendedName>
        <fullName evidence="1">ATP synthase subunit b 2</fullName>
    </recommendedName>
    <alternativeName>
        <fullName evidence="1">ATP synthase F(0) sector subunit b 2</fullName>
    </alternativeName>
    <alternativeName>
        <fullName evidence="1">ATPase subunit I 2</fullName>
    </alternativeName>
    <alternativeName>
        <fullName evidence="1">F-type ATPase subunit b 2</fullName>
        <shortName evidence="1">F-ATPase subunit b 2</shortName>
    </alternativeName>
</protein>
<comment type="function">
    <text evidence="1">F(1)F(0) ATP synthase produces ATP from ADP in the presence of a proton or sodium gradient. F-type ATPases consist of two structural domains, F(1) containing the extramembraneous catalytic core and F(0) containing the membrane proton channel, linked together by a central stalk and a peripheral stalk. During catalysis, ATP synthesis in the catalytic domain of F(1) is coupled via a rotary mechanism of the central stalk subunits to proton translocation.</text>
</comment>
<comment type="function">
    <text evidence="1">Component of the F(0) channel, it forms part of the peripheral stalk, linking F(1) to F(0).</text>
</comment>
<comment type="subunit">
    <text evidence="1">F-type ATPases have 2 components, F(1) - the catalytic core - and F(0) - the membrane proton channel. F(1) has five subunits: alpha(3), beta(3), gamma(1), delta(1), epsilon(1). F(0) has three main subunits: a(1), b(2) and c(10-14). The alpha and beta chains form an alternating ring which encloses part of the gamma chain. F(1) is attached to F(0) by a central stalk formed by the gamma and epsilon chains, while a peripheral stalk is formed by the delta and b chains.</text>
</comment>
<comment type="subcellular location">
    <subcellularLocation>
        <location evidence="1">Cell inner membrane</location>
        <topology evidence="1">Single-pass membrane protein</topology>
    </subcellularLocation>
</comment>
<comment type="similarity">
    <text evidence="1">Belongs to the ATPase B chain family.</text>
</comment>
<reference key="1">
    <citation type="journal article" date="2004" name="Proc. Natl. Acad. Sci. U.S.A.">
        <title>The louse-borne human pathogen Bartonella quintana is a genomic derivative of the zoonotic agent Bartonella henselae.</title>
        <authorList>
            <person name="Alsmark U.C.M."/>
            <person name="Frank A.C."/>
            <person name="Karlberg E.O."/>
            <person name="Legault B.-A."/>
            <person name="Ardell D.H."/>
            <person name="Canbaeck B."/>
            <person name="Eriksson A.-S."/>
            <person name="Naeslund A.K."/>
            <person name="Handley S.A."/>
            <person name="Huvet M."/>
            <person name="La Scola B."/>
            <person name="Holmberg M."/>
            <person name="Andersson S.G.E."/>
        </authorList>
    </citation>
    <scope>NUCLEOTIDE SEQUENCE [LARGE SCALE GENOMIC DNA]</scope>
    <source>
        <strain>Toulouse</strain>
    </source>
</reference>
<evidence type="ECO:0000255" key="1">
    <source>
        <dbReference type="HAMAP-Rule" id="MF_01398"/>
    </source>
</evidence>
<organism>
    <name type="scientific">Bartonella quintana (strain Toulouse)</name>
    <name type="common">Rochalimaea quintana</name>
    <dbReference type="NCBI Taxonomy" id="283165"/>
    <lineage>
        <taxon>Bacteria</taxon>
        <taxon>Pseudomonadati</taxon>
        <taxon>Pseudomonadota</taxon>
        <taxon>Alphaproteobacteria</taxon>
        <taxon>Hyphomicrobiales</taxon>
        <taxon>Bartonellaceae</taxon>
        <taxon>Bartonella</taxon>
    </lineage>
</organism>
<name>ATPF2_BARQU</name>
<feature type="chain" id="PRO_0000368345" description="ATP synthase subunit b 2">
    <location>
        <begin position="1"/>
        <end position="164"/>
    </location>
</feature>
<feature type="transmembrane region" description="Helical" evidence="1">
    <location>
        <begin position="4"/>
        <end position="24"/>
    </location>
</feature>
<dbReference type="EMBL" id="BX897700">
    <property type="protein sequence ID" value="CAF25816.1"/>
    <property type="molecule type" value="Genomic_DNA"/>
</dbReference>
<dbReference type="RefSeq" id="WP_011179112.1">
    <property type="nucleotide sequence ID" value="NC_005955.1"/>
</dbReference>
<dbReference type="SMR" id="Q6G0H0"/>
<dbReference type="KEGG" id="bqu:BQ03160"/>
<dbReference type="eggNOG" id="COG0711">
    <property type="taxonomic scope" value="Bacteria"/>
</dbReference>
<dbReference type="HOGENOM" id="CLU_079215_6_1_5"/>
<dbReference type="OrthoDB" id="8479836at2"/>
<dbReference type="Proteomes" id="UP000000597">
    <property type="component" value="Chromosome"/>
</dbReference>
<dbReference type="GO" id="GO:0005886">
    <property type="term" value="C:plasma membrane"/>
    <property type="evidence" value="ECO:0007669"/>
    <property type="project" value="UniProtKB-SubCell"/>
</dbReference>
<dbReference type="GO" id="GO:0045259">
    <property type="term" value="C:proton-transporting ATP synthase complex"/>
    <property type="evidence" value="ECO:0007669"/>
    <property type="project" value="UniProtKB-KW"/>
</dbReference>
<dbReference type="GO" id="GO:0046933">
    <property type="term" value="F:proton-transporting ATP synthase activity, rotational mechanism"/>
    <property type="evidence" value="ECO:0007669"/>
    <property type="project" value="UniProtKB-UniRule"/>
</dbReference>
<dbReference type="GO" id="GO:0046961">
    <property type="term" value="F:proton-transporting ATPase activity, rotational mechanism"/>
    <property type="evidence" value="ECO:0007669"/>
    <property type="project" value="TreeGrafter"/>
</dbReference>
<dbReference type="CDD" id="cd06503">
    <property type="entry name" value="ATP-synt_Fo_b"/>
    <property type="match status" value="1"/>
</dbReference>
<dbReference type="HAMAP" id="MF_01398">
    <property type="entry name" value="ATP_synth_b_bprime"/>
    <property type="match status" value="1"/>
</dbReference>
<dbReference type="InterPro" id="IPR002146">
    <property type="entry name" value="ATP_synth_b/b'su_bac/chlpt"/>
</dbReference>
<dbReference type="InterPro" id="IPR050059">
    <property type="entry name" value="ATP_synthase_B_chain"/>
</dbReference>
<dbReference type="NCBIfam" id="NF006611">
    <property type="entry name" value="PRK09173.1"/>
    <property type="match status" value="1"/>
</dbReference>
<dbReference type="PANTHER" id="PTHR33445:SF1">
    <property type="entry name" value="ATP SYNTHASE SUBUNIT B"/>
    <property type="match status" value="1"/>
</dbReference>
<dbReference type="PANTHER" id="PTHR33445">
    <property type="entry name" value="ATP SYNTHASE SUBUNIT B', CHLOROPLASTIC"/>
    <property type="match status" value="1"/>
</dbReference>
<dbReference type="Pfam" id="PF00430">
    <property type="entry name" value="ATP-synt_B"/>
    <property type="match status" value="1"/>
</dbReference>
<keyword id="KW-0066">ATP synthesis</keyword>
<keyword id="KW-0997">Cell inner membrane</keyword>
<keyword id="KW-1003">Cell membrane</keyword>
<keyword id="KW-0138">CF(0)</keyword>
<keyword id="KW-0375">Hydrogen ion transport</keyword>
<keyword id="KW-0406">Ion transport</keyword>
<keyword id="KW-0472">Membrane</keyword>
<keyword id="KW-0812">Transmembrane</keyword>
<keyword id="KW-1133">Transmembrane helix</keyword>
<keyword id="KW-0813">Transport</keyword>
<accession>Q6G0H0</accession>
<proteinExistence type="inferred from homology"/>